<protein>
    <recommendedName>
        <fullName evidence="1">Glutamyl-tRNA(Gln) amidotransferase subunit A</fullName>
        <shortName evidence="1">Glu-ADT subunit A</shortName>
        <ecNumber evidence="1">6.3.5.7</ecNumber>
    </recommendedName>
</protein>
<feature type="chain" id="PRO_0000241125" description="Glutamyl-tRNA(Gln) amidotransferase subunit A">
    <location>
        <begin position="1"/>
        <end position="490"/>
    </location>
</feature>
<feature type="active site" description="Charge relay system" evidence="1">
    <location>
        <position position="81"/>
    </location>
</feature>
<feature type="active site" description="Charge relay system" evidence="1">
    <location>
        <position position="156"/>
    </location>
</feature>
<feature type="active site" description="Acyl-ester intermediate" evidence="1">
    <location>
        <position position="180"/>
    </location>
</feature>
<comment type="function">
    <text evidence="1">Allows the formation of correctly charged Gln-tRNA(Gln) through the transamidation of misacylated Glu-tRNA(Gln) in organisms which lack glutaminyl-tRNA synthetase. The reaction takes place in the presence of glutamine and ATP through an activated gamma-phospho-Glu-tRNA(Gln).</text>
</comment>
<comment type="catalytic activity">
    <reaction evidence="1">
        <text>L-glutamyl-tRNA(Gln) + L-glutamine + ATP + H2O = L-glutaminyl-tRNA(Gln) + L-glutamate + ADP + phosphate + H(+)</text>
        <dbReference type="Rhea" id="RHEA:17521"/>
        <dbReference type="Rhea" id="RHEA-COMP:9681"/>
        <dbReference type="Rhea" id="RHEA-COMP:9684"/>
        <dbReference type="ChEBI" id="CHEBI:15377"/>
        <dbReference type="ChEBI" id="CHEBI:15378"/>
        <dbReference type="ChEBI" id="CHEBI:29985"/>
        <dbReference type="ChEBI" id="CHEBI:30616"/>
        <dbReference type="ChEBI" id="CHEBI:43474"/>
        <dbReference type="ChEBI" id="CHEBI:58359"/>
        <dbReference type="ChEBI" id="CHEBI:78520"/>
        <dbReference type="ChEBI" id="CHEBI:78521"/>
        <dbReference type="ChEBI" id="CHEBI:456216"/>
        <dbReference type="EC" id="6.3.5.7"/>
    </reaction>
</comment>
<comment type="subunit">
    <text evidence="1">Heterotrimer of A, B and C subunits.</text>
</comment>
<comment type="similarity">
    <text evidence="1">Belongs to the amidase family. GatA subfamily.</text>
</comment>
<gene>
    <name evidence="1" type="primary">gatA</name>
    <name type="ordered locus">NFA_42580</name>
</gene>
<accession>Q5YRT4</accession>
<keyword id="KW-0067">ATP-binding</keyword>
<keyword id="KW-0436">Ligase</keyword>
<keyword id="KW-0547">Nucleotide-binding</keyword>
<keyword id="KW-0648">Protein biosynthesis</keyword>
<keyword id="KW-1185">Reference proteome</keyword>
<sequence>MSDLTTRTAAELAQQIHAREISSVEVTQAHLDRIAEVDGELNAFLHVAGERALEAAAAVDAALAAGEAPASPLAGVPLALKDVFTTTDMPTTCASKILEGWMSPYDATVTTKLRAAGIPILGKTNMDEFAMGSSTENSAYGPTRNPWDTTRIPGGSGGGSAAALASRQAPLAIGTDTGGSIRQPAAVTATVGTKPTYGTVSRYGLVACASSLDQGGPCGRTVLDTALLHEVIAGYDPRDSTSRDVPVPPVVEAARRGAAGDLRGVKVGVVKELHSDSYQPGVLASFDAAVAVLKDLGAEVVEVSCPHFEYGLPSYYLVMPSEVSSNLARFDAMRYGLRVGDDGTHSAEQVMAMTRAAGFGPEVKRRIMIGTYALSAGYYDEYYGQALKVRTLIARDFDRAYEQVDVLVSPTSPFTPWKLGEKVDDPLAMYLSDLCTLPTNLAGHPAMSVPSGLSKDDGMPVGLQIMAPALADDRLYRVGAAYEAARGPIA</sequence>
<evidence type="ECO:0000255" key="1">
    <source>
        <dbReference type="HAMAP-Rule" id="MF_00120"/>
    </source>
</evidence>
<dbReference type="EC" id="6.3.5.7" evidence="1"/>
<dbReference type="EMBL" id="AP006618">
    <property type="protein sequence ID" value="BAD59107.1"/>
    <property type="molecule type" value="Genomic_DNA"/>
</dbReference>
<dbReference type="RefSeq" id="WP_011210792.1">
    <property type="nucleotide sequence ID" value="NC_006361.1"/>
</dbReference>
<dbReference type="SMR" id="Q5YRT4"/>
<dbReference type="STRING" id="247156.NFA_42580"/>
<dbReference type="GeneID" id="61134888"/>
<dbReference type="KEGG" id="nfa:NFA_42580"/>
<dbReference type="eggNOG" id="COG0154">
    <property type="taxonomic scope" value="Bacteria"/>
</dbReference>
<dbReference type="HOGENOM" id="CLU_009600_0_3_11"/>
<dbReference type="OrthoDB" id="9811471at2"/>
<dbReference type="Proteomes" id="UP000006820">
    <property type="component" value="Chromosome"/>
</dbReference>
<dbReference type="GO" id="GO:0030956">
    <property type="term" value="C:glutamyl-tRNA(Gln) amidotransferase complex"/>
    <property type="evidence" value="ECO:0007669"/>
    <property type="project" value="InterPro"/>
</dbReference>
<dbReference type="GO" id="GO:0005524">
    <property type="term" value="F:ATP binding"/>
    <property type="evidence" value="ECO:0007669"/>
    <property type="project" value="UniProtKB-KW"/>
</dbReference>
<dbReference type="GO" id="GO:0050567">
    <property type="term" value="F:glutaminyl-tRNA synthase (glutamine-hydrolyzing) activity"/>
    <property type="evidence" value="ECO:0007669"/>
    <property type="project" value="UniProtKB-UniRule"/>
</dbReference>
<dbReference type="GO" id="GO:0006412">
    <property type="term" value="P:translation"/>
    <property type="evidence" value="ECO:0007669"/>
    <property type="project" value="UniProtKB-UniRule"/>
</dbReference>
<dbReference type="Gene3D" id="3.90.1300.10">
    <property type="entry name" value="Amidase signature (AS) domain"/>
    <property type="match status" value="1"/>
</dbReference>
<dbReference type="HAMAP" id="MF_00120">
    <property type="entry name" value="GatA"/>
    <property type="match status" value="1"/>
</dbReference>
<dbReference type="InterPro" id="IPR000120">
    <property type="entry name" value="Amidase"/>
</dbReference>
<dbReference type="InterPro" id="IPR020556">
    <property type="entry name" value="Amidase_CS"/>
</dbReference>
<dbReference type="InterPro" id="IPR023631">
    <property type="entry name" value="Amidase_dom"/>
</dbReference>
<dbReference type="InterPro" id="IPR036928">
    <property type="entry name" value="AS_sf"/>
</dbReference>
<dbReference type="InterPro" id="IPR004412">
    <property type="entry name" value="GatA"/>
</dbReference>
<dbReference type="NCBIfam" id="TIGR00132">
    <property type="entry name" value="gatA"/>
    <property type="match status" value="1"/>
</dbReference>
<dbReference type="PANTHER" id="PTHR11895:SF151">
    <property type="entry name" value="GLUTAMYL-TRNA(GLN) AMIDOTRANSFERASE SUBUNIT A"/>
    <property type="match status" value="1"/>
</dbReference>
<dbReference type="PANTHER" id="PTHR11895">
    <property type="entry name" value="TRANSAMIDASE"/>
    <property type="match status" value="1"/>
</dbReference>
<dbReference type="Pfam" id="PF01425">
    <property type="entry name" value="Amidase"/>
    <property type="match status" value="1"/>
</dbReference>
<dbReference type="SUPFAM" id="SSF75304">
    <property type="entry name" value="Amidase signature (AS) enzymes"/>
    <property type="match status" value="1"/>
</dbReference>
<dbReference type="PROSITE" id="PS00571">
    <property type="entry name" value="AMIDASES"/>
    <property type="match status" value="1"/>
</dbReference>
<reference key="1">
    <citation type="journal article" date="2004" name="Proc. Natl. Acad. Sci. U.S.A.">
        <title>The complete genomic sequence of Nocardia farcinica IFM 10152.</title>
        <authorList>
            <person name="Ishikawa J."/>
            <person name="Yamashita A."/>
            <person name="Mikami Y."/>
            <person name="Hoshino Y."/>
            <person name="Kurita H."/>
            <person name="Hotta K."/>
            <person name="Shiba T."/>
            <person name="Hattori M."/>
        </authorList>
    </citation>
    <scope>NUCLEOTIDE SEQUENCE [LARGE SCALE GENOMIC DNA]</scope>
    <source>
        <strain>IFM 10152</strain>
    </source>
</reference>
<proteinExistence type="inferred from homology"/>
<name>GATA_NOCFA</name>
<organism>
    <name type="scientific">Nocardia farcinica (strain IFM 10152)</name>
    <dbReference type="NCBI Taxonomy" id="247156"/>
    <lineage>
        <taxon>Bacteria</taxon>
        <taxon>Bacillati</taxon>
        <taxon>Actinomycetota</taxon>
        <taxon>Actinomycetes</taxon>
        <taxon>Mycobacteriales</taxon>
        <taxon>Nocardiaceae</taxon>
        <taxon>Nocardia</taxon>
    </lineage>
</organism>